<evidence type="ECO:0000250" key="1"/>
<evidence type="ECO:0000250" key="2">
    <source>
        <dbReference type="UniProtKB" id="P34948"/>
    </source>
</evidence>
<evidence type="ECO:0000250" key="3">
    <source>
        <dbReference type="UniProtKB" id="P34949"/>
    </source>
</evidence>
<evidence type="ECO:0000250" key="4">
    <source>
        <dbReference type="UniProtKB" id="Q924M7"/>
    </source>
</evidence>
<evidence type="ECO:0000305" key="5"/>
<sequence length="423" mass="46602">MAAPRVFPLSCAVQQYAWGKMGYNSEVARLLASSDPLAQIAEDKPYAELWMGTHPRGDAKIFDNGISQKTLGQWIAENQDSLGSKVKDTFNGNLPFLFKVLSVETPLSIQAHPNKELAEKLHLQAPQHYPDANHKPEMAIALTPFQGLCGFRPVEEIVTFLKKVPEFQFLIGDEAATHLKQTMSHDSQAVASALQSCFSHLMKSEKKVVAEQLNLLVKRISQQVAAGNNMEDIFGELLLQLHQQYPGDIGCFAIYFLNLLNLKPGEAMFLEANVPHAYLKGDCVECMACSDNTVRAGLTPKFIDVPTLCEMLSYTPSSSKDRLFLPTRSQEDPYLSIYDPPVPDFAIMKMEVPGSVTEYKVLALDSASILLVVQGTVIASTPTTQTPIPLQRGGVLFIGANESVSLKLTEPKDLLIFRACCLL</sequence>
<protein>
    <recommendedName>
        <fullName>Mannose-6-phosphate isomerase</fullName>
        <ecNumber evidence="3">5.3.1.8</ecNumber>
    </recommendedName>
    <alternativeName>
        <fullName>Phosphohexomutase</fullName>
    </alternativeName>
    <alternativeName>
        <fullName evidence="3">Phosphomannose isomerase</fullName>
        <shortName evidence="3">PMI</shortName>
    </alternativeName>
</protein>
<keyword id="KW-0007">Acetylation</keyword>
<keyword id="KW-0963">Cytoplasm</keyword>
<keyword id="KW-0413">Isomerase</keyword>
<keyword id="KW-0479">Metal-binding</keyword>
<keyword id="KW-0597">Phosphoprotein</keyword>
<keyword id="KW-1185">Reference proteome</keyword>
<keyword id="KW-0862">Zinc</keyword>
<name>MPI_MACFA</name>
<gene>
    <name type="primary">MPI</name>
    <name type="ORF">QccE-15018</name>
</gene>
<reference key="1">
    <citation type="submission" date="2002-04" db="EMBL/GenBank/DDBJ databases">
        <title>Isolation and characterization of cDNA for macaque neurological disease genes.</title>
        <authorList>
            <person name="Kusuda J."/>
            <person name="Osada N."/>
            <person name="Hida M."/>
            <person name="Sugano S."/>
            <person name="Hashimoto K."/>
        </authorList>
    </citation>
    <scope>NUCLEOTIDE SEQUENCE [LARGE SCALE MRNA]</scope>
    <source>
        <tissue>Brain cortex</tissue>
    </source>
</reference>
<dbReference type="EC" id="5.3.1.8" evidence="3"/>
<dbReference type="EMBL" id="AB083318">
    <property type="protein sequence ID" value="BAC20597.1"/>
    <property type="molecule type" value="mRNA"/>
</dbReference>
<dbReference type="RefSeq" id="NP_001271952.1">
    <property type="nucleotide sequence ID" value="NM_001285023.1"/>
</dbReference>
<dbReference type="SMR" id="Q8HXX2"/>
<dbReference type="STRING" id="9541.ENSMFAP00000006361"/>
<dbReference type="eggNOG" id="KOG2757">
    <property type="taxonomic scope" value="Eukaryota"/>
</dbReference>
<dbReference type="UniPathway" id="UPA00126">
    <property type="reaction ID" value="UER00423"/>
</dbReference>
<dbReference type="Proteomes" id="UP000233100">
    <property type="component" value="Unplaced"/>
</dbReference>
<dbReference type="GO" id="GO:0005829">
    <property type="term" value="C:cytosol"/>
    <property type="evidence" value="ECO:0007669"/>
    <property type="project" value="TreeGrafter"/>
</dbReference>
<dbReference type="GO" id="GO:0004476">
    <property type="term" value="F:mannose-6-phosphate isomerase activity"/>
    <property type="evidence" value="ECO:0000250"/>
    <property type="project" value="UniProtKB"/>
</dbReference>
<dbReference type="GO" id="GO:0008270">
    <property type="term" value="F:zinc ion binding"/>
    <property type="evidence" value="ECO:0007669"/>
    <property type="project" value="InterPro"/>
</dbReference>
<dbReference type="GO" id="GO:0009298">
    <property type="term" value="P:GDP-mannose biosynthetic process"/>
    <property type="evidence" value="ECO:0007669"/>
    <property type="project" value="UniProtKB-UniPathway"/>
</dbReference>
<dbReference type="GO" id="GO:0061611">
    <property type="term" value="P:mannose to fructose-6-phosphate catabolic process"/>
    <property type="evidence" value="ECO:0000250"/>
    <property type="project" value="UniProtKB"/>
</dbReference>
<dbReference type="CDD" id="cd07011">
    <property type="entry name" value="cupin_PMI_type_I_N"/>
    <property type="match status" value="1"/>
</dbReference>
<dbReference type="FunFam" id="1.10.441.10:FF:000001">
    <property type="entry name" value="Mannose-6-phosphate isomerase"/>
    <property type="match status" value="1"/>
</dbReference>
<dbReference type="FunFam" id="2.60.120.10:FF:000044">
    <property type="entry name" value="Mannose-6-phosphate isomerase"/>
    <property type="match status" value="1"/>
</dbReference>
<dbReference type="FunFam" id="2.60.120.10:FF:000060">
    <property type="entry name" value="Putative mannose-6-phosphate isomerase"/>
    <property type="match status" value="1"/>
</dbReference>
<dbReference type="Gene3D" id="2.60.120.10">
    <property type="entry name" value="Jelly Rolls"/>
    <property type="match status" value="2"/>
</dbReference>
<dbReference type="Gene3D" id="1.10.441.10">
    <property type="entry name" value="Phosphomannose Isomerase, domain 2"/>
    <property type="match status" value="1"/>
</dbReference>
<dbReference type="InterPro" id="IPR001250">
    <property type="entry name" value="Man6P_Isoase-1"/>
</dbReference>
<dbReference type="InterPro" id="IPR016305">
    <property type="entry name" value="Mannose-6-P_Isomerase"/>
</dbReference>
<dbReference type="InterPro" id="IPR018050">
    <property type="entry name" value="Pmannose_isomerase-type1_CS"/>
</dbReference>
<dbReference type="InterPro" id="IPR046456">
    <property type="entry name" value="PMI_typeI_C"/>
</dbReference>
<dbReference type="InterPro" id="IPR046457">
    <property type="entry name" value="PMI_typeI_cat"/>
</dbReference>
<dbReference type="InterPro" id="IPR046458">
    <property type="entry name" value="PMI_typeI_hel"/>
</dbReference>
<dbReference type="InterPro" id="IPR014710">
    <property type="entry name" value="RmlC-like_jellyroll"/>
</dbReference>
<dbReference type="InterPro" id="IPR011051">
    <property type="entry name" value="RmlC_Cupin_sf"/>
</dbReference>
<dbReference type="NCBIfam" id="TIGR00218">
    <property type="entry name" value="manA"/>
    <property type="match status" value="1"/>
</dbReference>
<dbReference type="PANTHER" id="PTHR10309">
    <property type="entry name" value="MANNOSE-6-PHOSPHATE ISOMERASE"/>
    <property type="match status" value="1"/>
</dbReference>
<dbReference type="PANTHER" id="PTHR10309:SF0">
    <property type="entry name" value="MANNOSE-6-PHOSPHATE ISOMERASE"/>
    <property type="match status" value="1"/>
</dbReference>
<dbReference type="Pfam" id="PF01238">
    <property type="entry name" value="PMI_typeI_C"/>
    <property type="match status" value="1"/>
</dbReference>
<dbReference type="Pfam" id="PF20511">
    <property type="entry name" value="PMI_typeI_cat"/>
    <property type="match status" value="1"/>
</dbReference>
<dbReference type="Pfam" id="PF20512">
    <property type="entry name" value="PMI_typeI_hel"/>
    <property type="match status" value="1"/>
</dbReference>
<dbReference type="PIRSF" id="PIRSF001480">
    <property type="entry name" value="Mannose-6-phosphate_isomerase"/>
    <property type="match status" value="1"/>
</dbReference>
<dbReference type="PRINTS" id="PR00714">
    <property type="entry name" value="MAN6PISMRASE"/>
</dbReference>
<dbReference type="SUPFAM" id="SSF51182">
    <property type="entry name" value="RmlC-like cupins"/>
    <property type="match status" value="1"/>
</dbReference>
<dbReference type="PROSITE" id="PS00965">
    <property type="entry name" value="PMI_I_1"/>
    <property type="match status" value="1"/>
</dbReference>
<dbReference type="PROSITE" id="PS00966">
    <property type="entry name" value="PMI_I_2"/>
    <property type="match status" value="1"/>
</dbReference>
<feature type="initiator methionine" description="Removed" evidence="3">
    <location>
        <position position="1"/>
    </location>
</feature>
<feature type="chain" id="PRO_0000194236" description="Mannose-6-phosphate isomerase">
    <location>
        <begin position="2"/>
        <end position="423"/>
    </location>
</feature>
<feature type="active site" evidence="1">
    <location>
        <position position="295"/>
    </location>
</feature>
<feature type="binding site" evidence="1">
    <location>
        <position position="110"/>
    </location>
    <ligand>
        <name>Zn(2+)</name>
        <dbReference type="ChEBI" id="CHEBI:29105"/>
    </ligand>
</feature>
<feature type="binding site" evidence="1">
    <location>
        <position position="112"/>
    </location>
    <ligand>
        <name>Zn(2+)</name>
        <dbReference type="ChEBI" id="CHEBI:29105"/>
    </ligand>
</feature>
<feature type="binding site" evidence="1">
    <location>
        <position position="137"/>
    </location>
    <ligand>
        <name>Zn(2+)</name>
        <dbReference type="ChEBI" id="CHEBI:29105"/>
    </ligand>
</feature>
<feature type="binding site" evidence="1">
    <location>
        <position position="276"/>
    </location>
    <ligand>
        <name>Zn(2+)</name>
        <dbReference type="ChEBI" id="CHEBI:29105"/>
    </ligand>
</feature>
<feature type="modified residue" description="N-acetylalanine" evidence="3">
    <location>
        <position position="2"/>
    </location>
</feature>
<feature type="modified residue" description="Phosphoserine" evidence="3">
    <location>
        <position position="102"/>
    </location>
</feature>
<feature type="modified residue" description="Phosphoserine" evidence="3">
    <location>
        <position position="108"/>
    </location>
</feature>
<comment type="function">
    <text evidence="3">Isomerase that catalyzes the interconversion of fructose-6-P and mannose-6-P and has a critical role in the supply of D-mannose derivatives required for many eukaryotic glycosylation reactions.</text>
</comment>
<comment type="catalytic activity">
    <reaction evidence="3">
        <text>D-mannose 6-phosphate = D-fructose 6-phosphate</text>
        <dbReference type="Rhea" id="RHEA:12356"/>
        <dbReference type="ChEBI" id="CHEBI:58735"/>
        <dbReference type="ChEBI" id="CHEBI:61527"/>
        <dbReference type="EC" id="5.3.1.8"/>
    </reaction>
</comment>
<comment type="cofactor">
    <cofactor evidence="2">
        <name>Zn(2+)</name>
        <dbReference type="ChEBI" id="CHEBI:29105"/>
    </cofactor>
    <text evidence="2">Binds 1 zinc ion per subunit.</text>
</comment>
<comment type="pathway">
    <text>Nucleotide-sugar biosynthesis; GDP-alpha-D-mannose biosynthesis; alpha-D-mannose 1-phosphate from D-fructose 6-phosphate: step 1/2.</text>
</comment>
<comment type="subcellular location">
    <subcellularLocation>
        <location evidence="4">Cytoplasm</location>
    </subcellularLocation>
</comment>
<comment type="similarity">
    <text evidence="5">Belongs to the mannose-6-phosphate isomerase type 1 family.</text>
</comment>
<proteinExistence type="evidence at transcript level"/>
<organism>
    <name type="scientific">Macaca fascicularis</name>
    <name type="common">Crab-eating macaque</name>
    <name type="synonym">Cynomolgus monkey</name>
    <dbReference type="NCBI Taxonomy" id="9541"/>
    <lineage>
        <taxon>Eukaryota</taxon>
        <taxon>Metazoa</taxon>
        <taxon>Chordata</taxon>
        <taxon>Craniata</taxon>
        <taxon>Vertebrata</taxon>
        <taxon>Euteleostomi</taxon>
        <taxon>Mammalia</taxon>
        <taxon>Eutheria</taxon>
        <taxon>Euarchontoglires</taxon>
        <taxon>Primates</taxon>
        <taxon>Haplorrhini</taxon>
        <taxon>Catarrhini</taxon>
        <taxon>Cercopithecidae</taxon>
        <taxon>Cercopithecinae</taxon>
        <taxon>Macaca</taxon>
    </lineage>
</organism>
<accession>Q8HXX2</accession>